<sequence>MALRQCAIYGKGGIGKSTTTQNLVSALAEMGKKVMIIGCDPKADSTRLILHAKAQNTIMEMAAEVGSVEDLELEDVLQIGYGGVRCAESGGPEPGVGCAGRGVITAINFLEEEGAYEEDLDFVFYDVLGDVVCGGFAMPIRENKAQEIYIVCSGEMMAMYAANNISKGIVKYAKSGSVRLAGLICNSRQTDREDELIIALADKLGTQMIHFVPRDNIVQRAEIRRMTVIEYDPTCKQANEYRTLANKVVNNKLFVVPTPVTMDELEELLMEFGIMDVEDETIIGKTAAEEAAATA</sequence>
<reference key="1">
    <citation type="submission" date="2009-05" db="EMBL/GenBank/DDBJ databases">
        <title>Complete sequence of Tolumonas auensis DSM 9187.</title>
        <authorList>
            <consortium name="US DOE Joint Genome Institute"/>
            <person name="Lucas S."/>
            <person name="Copeland A."/>
            <person name="Lapidus A."/>
            <person name="Glavina del Rio T."/>
            <person name="Tice H."/>
            <person name="Bruce D."/>
            <person name="Goodwin L."/>
            <person name="Pitluck S."/>
            <person name="Chertkov O."/>
            <person name="Brettin T."/>
            <person name="Detter J.C."/>
            <person name="Han C."/>
            <person name="Larimer F."/>
            <person name="Land M."/>
            <person name="Hauser L."/>
            <person name="Kyrpides N."/>
            <person name="Mikhailova N."/>
            <person name="Spring S."/>
            <person name="Beller H."/>
        </authorList>
    </citation>
    <scope>NUCLEOTIDE SEQUENCE [LARGE SCALE GENOMIC DNA]</scope>
    <source>
        <strain>DSM 9187 / NBRC 110442 / TA 4</strain>
    </source>
</reference>
<evidence type="ECO:0000255" key="1">
    <source>
        <dbReference type="HAMAP-Rule" id="MF_00533"/>
    </source>
</evidence>
<proteinExistence type="inferred from homology"/>
<dbReference type="EC" id="1.18.6.1" evidence="1"/>
<dbReference type="EMBL" id="CP001616">
    <property type="protein sequence ID" value="ACQ92279.1"/>
    <property type="molecule type" value="Genomic_DNA"/>
</dbReference>
<dbReference type="RefSeq" id="WP_012728878.1">
    <property type="nucleotide sequence ID" value="NC_012691.1"/>
</dbReference>
<dbReference type="SMR" id="C4LAS5"/>
<dbReference type="STRING" id="595494.Tola_0650"/>
<dbReference type="KEGG" id="tau:Tola_0650"/>
<dbReference type="eggNOG" id="COG1348">
    <property type="taxonomic scope" value="Bacteria"/>
</dbReference>
<dbReference type="HOGENOM" id="CLU_059373_0_0_6"/>
<dbReference type="OrthoDB" id="9815116at2"/>
<dbReference type="Proteomes" id="UP000009073">
    <property type="component" value="Chromosome"/>
</dbReference>
<dbReference type="GO" id="GO:0051539">
    <property type="term" value="F:4 iron, 4 sulfur cluster binding"/>
    <property type="evidence" value="ECO:0007669"/>
    <property type="project" value="UniProtKB-KW"/>
</dbReference>
<dbReference type="GO" id="GO:0005524">
    <property type="term" value="F:ATP binding"/>
    <property type="evidence" value="ECO:0007669"/>
    <property type="project" value="UniProtKB-UniRule"/>
</dbReference>
<dbReference type="GO" id="GO:0046872">
    <property type="term" value="F:metal ion binding"/>
    <property type="evidence" value="ECO:0007669"/>
    <property type="project" value="UniProtKB-KW"/>
</dbReference>
<dbReference type="GO" id="GO:0016163">
    <property type="term" value="F:nitrogenase activity"/>
    <property type="evidence" value="ECO:0007669"/>
    <property type="project" value="UniProtKB-UniRule"/>
</dbReference>
<dbReference type="GO" id="GO:0009399">
    <property type="term" value="P:nitrogen fixation"/>
    <property type="evidence" value="ECO:0007669"/>
    <property type="project" value="UniProtKB-UniRule"/>
</dbReference>
<dbReference type="CDD" id="cd02040">
    <property type="entry name" value="NifH"/>
    <property type="match status" value="1"/>
</dbReference>
<dbReference type="FunFam" id="3.40.50.300:FF:001379">
    <property type="entry name" value="Nitrogenase iron protein 1"/>
    <property type="match status" value="1"/>
</dbReference>
<dbReference type="Gene3D" id="3.40.50.300">
    <property type="entry name" value="P-loop containing nucleotide triphosphate hydrolases"/>
    <property type="match status" value="1"/>
</dbReference>
<dbReference type="HAMAP" id="MF_00533">
    <property type="entry name" value="NifH"/>
    <property type="match status" value="1"/>
</dbReference>
<dbReference type="InterPro" id="IPR030655">
    <property type="entry name" value="NifH/chlL_CS"/>
</dbReference>
<dbReference type="InterPro" id="IPR000392">
    <property type="entry name" value="NifH/frxC"/>
</dbReference>
<dbReference type="InterPro" id="IPR005977">
    <property type="entry name" value="Nitrogenase_Fe_NifH"/>
</dbReference>
<dbReference type="InterPro" id="IPR027417">
    <property type="entry name" value="P-loop_NTPase"/>
</dbReference>
<dbReference type="NCBIfam" id="TIGR01287">
    <property type="entry name" value="nifH"/>
    <property type="match status" value="1"/>
</dbReference>
<dbReference type="PANTHER" id="PTHR42864">
    <property type="entry name" value="LIGHT-INDEPENDENT PROTOCHLOROPHYLLIDE REDUCTASE IRON-SULFUR ATP-BINDING PROTEIN"/>
    <property type="match status" value="1"/>
</dbReference>
<dbReference type="PANTHER" id="PTHR42864:SF2">
    <property type="entry name" value="LIGHT-INDEPENDENT PROTOCHLOROPHYLLIDE REDUCTASE IRON-SULFUR ATP-BINDING PROTEIN"/>
    <property type="match status" value="1"/>
</dbReference>
<dbReference type="Pfam" id="PF00142">
    <property type="entry name" value="Fer4_NifH"/>
    <property type="match status" value="1"/>
</dbReference>
<dbReference type="PIRSF" id="PIRSF000363">
    <property type="entry name" value="Nitrogenase_iron"/>
    <property type="match status" value="1"/>
</dbReference>
<dbReference type="PRINTS" id="PR00091">
    <property type="entry name" value="NITROGNASEII"/>
</dbReference>
<dbReference type="SUPFAM" id="SSF52540">
    <property type="entry name" value="P-loop containing nucleoside triphosphate hydrolases"/>
    <property type="match status" value="1"/>
</dbReference>
<dbReference type="PROSITE" id="PS00746">
    <property type="entry name" value="NIFH_FRXC_1"/>
    <property type="match status" value="1"/>
</dbReference>
<dbReference type="PROSITE" id="PS00692">
    <property type="entry name" value="NIFH_FRXC_2"/>
    <property type="match status" value="1"/>
</dbReference>
<dbReference type="PROSITE" id="PS51026">
    <property type="entry name" value="NIFH_FRXC_3"/>
    <property type="match status" value="1"/>
</dbReference>
<accession>C4LAS5</accession>
<comment type="function">
    <text evidence="1">The key enzymatic reactions in nitrogen fixation are catalyzed by the nitrogenase complex, which has 2 components: the iron protein and the molybdenum-iron protein.</text>
</comment>
<comment type="catalytic activity">
    <reaction evidence="1">
        <text>N2 + 8 reduced [2Fe-2S]-[ferredoxin] + 16 ATP + 16 H2O = H2 + 8 oxidized [2Fe-2S]-[ferredoxin] + 2 NH4(+) + 16 ADP + 16 phosphate + 6 H(+)</text>
        <dbReference type="Rhea" id="RHEA:21448"/>
        <dbReference type="Rhea" id="RHEA-COMP:10000"/>
        <dbReference type="Rhea" id="RHEA-COMP:10001"/>
        <dbReference type="ChEBI" id="CHEBI:15377"/>
        <dbReference type="ChEBI" id="CHEBI:15378"/>
        <dbReference type="ChEBI" id="CHEBI:17997"/>
        <dbReference type="ChEBI" id="CHEBI:18276"/>
        <dbReference type="ChEBI" id="CHEBI:28938"/>
        <dbReference type="ChEBI" id="CHEBI:30616"/>
        <dbReference type="ChEBI" id="CHEBI:33737"/>
        <dbReference type="ChEBI" id="CHEBI:33738"/>
        <dbReference type="ChEBI" id="CHEBI:43474"/>
        <dbReference type="ChEBI" id="CHEBI:456216"/>
        <dbReference type="EC" id="1.18.6.1"/>
    </reaction>
</comment>
<comment type="cofactor">
    <cofactor evidence="1">
        <name>[4Fe-4S] cluster</name>
        <dbReference type="ChEBI" id="CHEBI:49883"/>
    </cofactor>
    <text evidence="1">Binds 1 [4Fe-4S] cluster per dimer.</text>
</comment>
<comment type="subunit">
    <text evidence="1">Homodimer.</text>
</comment>
<comment type="PTM">
    <text evidence="1">The reversible ADP-ribosylation of Arg-101 inactivates the nitrogenase reductase and regulates nitrogenase activity.</text>
</comment>
<comment type="similarity">
    <text evidence="1">Belongs to the NifH/BchL/ChlL family.</text>
</comment>
<feature type="chain" id="PRO_1000211893" description="Nitrogenase iron protein">
    <location>
        <begin position="1"/>
        <end position="295"/>
    </location>
</feature>
<feature type="binding site" evidence="1">
    <location>
        <begin position="10"/>
        <end position="17"/>
    </location>
    <ligand>
        <name>ATP</name>
        <dbReference type="ChEBI" id="CHEBI:30616"/>
    </ligand>
</feature>
<feature type="binding site" evidence="1">
    <location>
        <position position="98"/>
    </location>
    <ligand>
        <name>[4Fe-4S] cluster</name>
        <dbReference type="ChEBI" id="CHEBI:49883"/>
        <note>ligand shared between dimeric partners</note>
    </ligand>
</feature>
<feature type="binding site" evidence="1">
    <location>
        <position position="133"/>
    </location>
    <ligand>
        <name>[4Fe-4S] cluster</name>
        <dbReference type="ChEBI" id="CHEBI:49883"/>
        <note>ligand shared between dimeric partners</note>
    </ligand>
</feature>
<feature type="modified residue" description="ADP-ribosylarginine; by dinitrogenase reductase ADP-ribosyltransferase" evidence="1">
    <location>
        <position position="101"/>
    </location>
</feature>
<organism>
    <name type="scientific">Tolumonas auensis (strain DSM 9187 / NBRC 110442 / TA 4)</name>
    <dbReference type="NCBI Taxonomy" id="595494"/>
    <lineage>
        <taxon>Bacteria</taxon>
        <taxon>Pseudomonadati</taxon>
        <taxon>Pseudomonadota</taxon>
        <taxon>Gammaproteobacteria</taxon>
        <taxon>Aeromonadales</taxon>
        <taxon>Aeromonadaceae</taxon>
        <taxon>Tolumonas</taxon>
    </lineage>
</organism>
<gene>
    <name evidence="1" type="primary">nifH</name>
    <name type="ordered locus">Tola_0650</name>
</gene>
<name>NIFH_TOLAT</name>
<protein>
    <recommendedName>
        <fullName evidence="1">Nitrogenase iron protein</fullName>
        <ecNumber evidence="1">1.18.6.1</ecNumber>
    </recommendedName>
    <alternativeName>
        <fullName evidence="1">Nitrogenase Fe protein</fullName>
    </alternativeName>
    <alternativeName>
        <fullName evidence="1">Nitrogenase component II</fullName>
    </alternativeName>
    <alternativeName>
        <fullName evidence="1">Nitrogenase reductase</fullName>
    </alternativeName>
</protein>
<keyword id="KW-0004">4Fe-4S</keyword>
<keyword id="KW-0013">ADP-ribosylation</keyword>
<keyword id="KW-0067">ATP-binding</keyword>
<keyword id="KW-0408">Iron</keyword>
<keyword id="KW-0411">Iron-sulfur</keyword>
<keyword id="KW-0479">Metal-binding</keyword>
<keyword id="KW-0535">Nitrogen fixation</keyword>
<keyword id="KW-0547">Nucleotide-binding</keyword>
<keyword id="KW-0560">Oxidoreductase</keyword>
<keyword id="KW-1185">Reference proteome</keyword>